<proteinExistence type="inferred from homology"/>
<evidence type="ECO:0000255" key="1">
    <source>
        <dbReference type="HAMAP-Rule" id="MF_01448"/>
    </source>
</evidence>
<feature type="chain" id="PRO_1000200982" description="UPF0473 protein SPCG_0207">
    <location>
        <begin position="1"/>
        <end position="101"/>
    </location>
</feature>
<name>Y207_STRPS</name>
<accession>B2IS29</accession>
<organism>
    <name type="scientific">Streptococcus pneumoniae (strain CGSP14)</name>
    <dbReference type="NCBI Taxonomy" id="516950"/>
    <lineage>
        <taxon>Bacteria</taxon>
        <taxon>Bacillati</taxon>
        <taxon>Bacillota</taxon>
        <taxon>Bacilli</taxon>
        <taxon>Lactobacillales</taxon>
        <taxon>Streptococcaceae</taxon>
        <taxon>Streptococcus</taxon>
    </lineage>
</organism>
<gene>
    <name type="ordered locus">SPCG_0207</name>
</gene>
<reference key="1">
    <citation type="journal article" date="2009" name="BMC Genomics">
        <title>Genome evolution driven by host adaptations results in a more virulent and antimicrobial-resistant Streptococcus pneumoniae serotype 14.</title>
        <authorList>
            <person name="Ding F."/>
            <person name="Tang P."/>
            <person name="Hsu M.-H."/>
            <person name="Cui P."/>
            <person name="Hu S."/>
            <person name="Yu J."/>
            <person name="Chiu C.-H."/>
        </authorList>
    </citation>
    <scope>NUCLEOTIDE SEQUENCE [LARGE SCALE GENOMIC DNA]</scope>
    <source>
        <strain>CGSP14</strain>
    </source>
</reference>
<dbReference type="EMBL" id="CP001033">
    <property type="protein sequence ID" value="ACB89459.1"/>
    <property type="molecule type" value="Genomic_DNA"/>
</dbReference>
<dbReference type="RefSeq" id="WP_000017620.1">
    <property type="nucleotide sequence ID" value="NC_010582.1"/>
</dbReference>
<dbReference type="KEGG" id="spw:SPCG_0207"/>
<dbReference type="HOGENOM" id="CLU_146610_2_1_9"/>
<dbReference type="HAMAP" id="MF_01448">
    <property type="entry name" value="UPF0473"/>
    <property type="match status" value="1"/>
</dbReference>
<dbReference type="InterPro" id="IPR009711">
    <property type="entry name" value="UPF0473"/>
</dbReference>
<dbReference type="NCBIfam" id="NF010215">
    <property type="entry name" value="PRK13678.1-2"/>
    <property type="match status" value="1"/>
</dbReference>
<dbReference type="NCBIfam" id="NF010217">
    <property type="entry name" value="PRK13678.1-4"/>
    <property type="match status" value="1"/>
</dbReference>
<dbReference type="PANTHER" id="PTHR40066">
    <property type="entry name" value="UPF0473 PROTEIN CBO2561/CLC_2432"/>
    <property type="match status" value="1"/>
</dbReference>
<dbReference type="PANTHER" id="PTHR40066:SF1">
    <property type="entry name" value="UPF0473 PROTEIN CBO2561_CLC_2432"/>
    <property type="match status" value="1"/>
</dbReference>
<dbReference type="Pfam" id="PF06949">
    <property type="entry name" value="DUF1292"/>
    <property type="match status" value="1"/>
</dbReference>
<sequence length="101" mass="11759">MSHDHNHDHEERELITLVDEQGNETLFEILLTIDGKEEFGKNYVLLVPVNAEEDEDGQVEIQAYSFIENEDGTEGELQPIPEDSEDEWNMIEEVFNSFMEE</sequence>
<comment type="similarity">
    <text evidence="1">Belongs to the UPF0473 family.</text>
</comment>
<protein>
    <recommendedName>
        <fullName evidence="1">UPF0473 protein SPCG_0207</fullName>
    </recommendedName>
</protein>